<feature type="propeptide" id="PRO_0000459977" evidence="1">
    <location>
        <begin position="1"/>
        <end position="13"/>
    </location>
</feature>
<feature type="chain" id="PRO_0000181200" description="Large ribosomal subunit protein bL27">
    <location>
        <begin position="14"/>
        <end position="100"/>
    </location>
</feature>
<feature type="region of interest" description="Disordered" evidence="3">
    <location>
        <begin position="17"/>
        <end position="39"/>
    </location>
</feature>
<proteinExistence type="inferred from homology"/>
<protein>
    <recommendedName>
        <fullName evidence="2">Large ribosomal subunit protein bL27</fullName>
    </recommendedName>
    <alternativeName>
        <fullName evidence="4">50S ribosomal protein L27</fullName>
    </alternativeName>
</protein>
<name>RL27_UREPA</name>
<comment type="PTM">
    <text evidence="1">The N-terminus is cleaved by ribosomal processing cysteine protease Prp.</text>
</comment>
<comment type="similarity">
    <text evidence="2">Belongs to the bacterial ribosomal protein bL27 family.</text>
</comment>
<accession>Q9PQT2</accession>
<organism>
    <name type="scientific">Ureaplasma parvum serovar 3 (strain ATCC 700970)</name>
    <dbReference type="NCBI Taxonomy" id="273119"/>
    <lineage>
        <taxon>Bacteria</taxon>
        <taxon>Bacillati</taxon>
        <taxon>Mycoplasmatota</taxon>
        <taxon>Mycoplasmoidales</taxon>
        <taxon>Mycoplasmoidaceae</taxon>
        <taxon>Ureaplasma</taxon>
    </lineage>
</organism>
<gene>
    <name evidence="2" type="primary">rpmA</name>
    <name evidence="2" type="synonym">rpl27</name>
    <name type="ordered locus">UU210</name>
</gene>
<sequence>MNKLYWLTDLQLFASKKGVGSSKNGRDSNPKYLGAKLGDGQSTKAGQIIYRQRGNKIYPGLNVGQGKDHTLFAKTAGVVKYTKFMGDKTKVSVLPKEDNN</sequence>
<reference key="1">
    <citation type="journal article" date="2000" name="Nature">
        <title>The complete sequence of the mucosal pathogen Ureaplasma urealyticum.</title>
        <authorList>
            <person name="Glass J.I."/>
            <person name="Lefkowitz E.J."/>
            <person name="Glass J.S."/>
            <person name="Heiner C.R."/>
            <person name="Chen E.Y."/>
            <person name="Cassell G.H."/>
        </authorList>
    </citation>
    <scope>NUCLEOTIDE SEQUENCE [LARGE SCALE GENOMIC DNA]</scope>
    <source>
        <strain>ATCC 700970</strain>
    </source>
</reference>
<keyword id="KW-1185">Reference proteome</keyword>
<keyword id="KW-0687">Ribonucleoprotein</keyword>
<keyword id="KW-0689">Ribosomal protein</keyword>
<dbReference type="EMBL" id="AF222894">
    <property type="protein sequence ID" value="AAF30618.1"/>
    <property type="molecule type" value="Genomic_DNA"/>
</dbReference>
<dbReference type="RefSeq" id="WP_006688856.1">
    <property type="nucleotide sequence ID" value="NC_002162.1"/>
</dbReference>
<dbReference type="SMR" id="Q9PQT2"/>
<dbReference type="STRING" id="273119.UU210"/>
<dbReference type="EnsemblBacteria" id="AAF30618">
    <property type="protein sequence ID" value="AAF30618"/>
    <property type="gene ID" value="UU210"/>
</dbReference>
<dbReference type="GeneID" id="29672654"/>
<dbReference type="KEGG" id="uur:UU210"/>
<dbReference type="eggNOG" id="COG0211">
    <property type="taxonomic scope" value="Bacteria"/>
</dbReference>
<dbReference type="HOGENOM" id="CLU_095424_4_0_14"/>
<dbReference type="OrthoDB" id="9803474at2"/>
<dbReference type="Proteomes" id="UP000000423">
    <property type="component" value="Chromosome"/>
</dbReference>
<dbReference type="GO" id="GO:0022625">
    <property type="term" value="C:cytosolic large ribosomal subunit"/>
    <property type="evidence" value="ECO:0007669"/>
    <property type="project" value="TreeGrafter"/>
</dbReference>
<dbReference type="GO" id="GO:0003735">
    <property type="term" value="F:structural constituent of ribosome"/>
    <property type="evidence" value="ECO:0007669"/>
    <property type="project" value="InterPro"/>
</dbReference>
<dbReference type="GO" id="GO:0006412">
    <property type="term" value="P:translation"/>
    <property type="evidence" value="ECO:0007669"/>
    <property type="project" value="UniProtKB-UniRule"/>
</dbReference>
<dbReference type="FunFam" id="2.40.50.100:FF:000004">
    <property type="entry name" value="50S ribosomal protein L27"/>
    <property type="match status" value="1"/>
</dbReference>
<dbReference type="Gene3D" id="2.40.50.100">
    <property type="match status" value="1"/>
</dbReference>
<dbReference type="HAMAP" id="MF_00539">
    <property type="entry name" value="Ribosomal_bL27"/>
    <property type="match status" value="1"/>
</dbReference>
<dbReference type="InterPro" id="IPR001684">
    <property type="entry name" value="Ribosomal_bL27"/>
</dbReference>
<dbReference type="InterPro" id="IPR018261">
    <property type="entry name" value="Ribosomal_bL27_CS"/>
</dbReference>
<dbReference type="NCBIfam" id="TIGR00062">
    <property type="entry name" value="L27"/>
    <property type="match status" value="1"/>
</dbReference>
<dbReference type="PANTHER" id="PTHR15893:SF0">
    <property type="entry name" value="LARGE RIBOSOMAL SUBUNIT PROTEIN BL27M"/>
    <property type="match status" value="1"/>
</dbReference>
<dbReference type="PANTHER" id="PTHR15893">
    <property type="entry name" value="RIBOSOMAL PROTEIN L27"/>
    <property type="match status" value="1"/>
</dbReference>
<dbReference type="Pfam" id="PF01016">
    <property type="entry name" value="Ribosomal_L27"/>
    <property type="match status" value="1"/>
</dbReference>
<dbReference type="PRINTS" id="PR00063">
    <property type="entry name" value="RIBOSOMALL27"/>
</dbReference>
<dbReference type="SUPFAM" id="SSF110324">
    <property type="entry name" value="Ribosomal L27 protein-like"/>
    <property type="match status" value="1"/>
</dbReference>
<dbReference type="PROSITE" id="PS00831">
    <property type="entry name" value="RIBOSOMAL_L27"/>
    <property type="match status" value="1"/>
</dbReference>
<evidence type="ECO:0000250" key="1">
    <source>
        <dbReference type="UniProtKB" id="Q2FXT0"/>
    </source>
</evidence>
<evidence type="ECO:0000255" key="2">
    <source>
        <dbReference type="HAMAP-Rule" id="MF_00539"/>
    </source>
</evidence>
<evidence type="ECO:0000256" key="3">
    <source>
        <dbReference type="SAM" id="MobiDB-lite"/>
    </source>
</evidence>
<evidence type="ECO:0000305" key="4"/>